<proteinExistence type="evidence at transcript level"/>
<protein>
    <recommendedName>
        <fullName>von Willebrand factor</fullName>
        <shortName>vWF</shortName>
    </recommendedName>
</protein>
<evidence type="ECO:0000250" key="1"/>
<evidence type="ECO:0000250" key="2">
    <source>
        <dbReference type="UniProtKB" id="P04275"/>
    </source>
</evidence>
<evidence type="ECO:0000255" key="3">
    <source>
        <dbReference type="PROSITE-ProRule" id="PRU00219"/>
    </source>
</evidence>
<evidence type="ECO:0000305" key="4"/>
<evidence type="ECO:0000312" key="5">
    <source>
        <dbReference type="EMBL" id="AAA96311.1"/>
    </source>
</evidence>
<evidence type="ECO:0000312" key="6">
    <source>
        <dbReference type="EMBL" id="AAB39496.1"/>
    </source>
</evidence>
<evidence type="ECO:0000312" key="7">
    <source>
        <dbReference type="EMBL" id="CAB37852.1"/>
    </source>
</evidence>
<sequence length="430" mass="48139">HCDGVNLTCEACQEPGGLVVPPTDAPVSSTTPYVEDTPEPPLHNFYCSKLLDLVFLLDGSYRLSEAEFEVLKAFVVGTMERLHISQKRIRVAVVEYHDGSHAYLELRARKRPSELRRIASQIKYVGSQLASTSEVLKYTLFQIFGKIDRPEASRVILLLTASQEPQRMARYFTRYLQGFKKKKVILIPVGIGPHANLKQIRLIEKQAPENKAFLLSGVDELEQRRDEIINYLCDLAPEAPAPSKPPQVAHITVSPGISGVSSPGPKRKSLVLDVVFVLEASDEVGEANFNKSKEFLEEVIQRMDVSPAGTHIAVLQYSYTVNVEYTFKEAQSKEDVLRHVREIRYQGGNRTNTGQALQYLSEHSFSPSQGDREQAPNLVYMVTGNPASDEIRRLPGDIQVVPIGVGSRANLQELERISRPITPIFIQDFE</sequence>
<gene>
    <name evidence="7" type="primary">Vwf</name>
</gene>
<name>VWF_RAT</name>
<dbReference type="EMBL" id="U50044">
    <property type="protein sequence ID" value="AAA96311.1"/>
    <property type="molecule type" value="mRNA"/>
</dbReference>
<dbReference type="EMBL" id="AJ224673">
    <property type="protein sequence ID" value="CAB37852.1"/>
    <property type="molecule type" value="Genomic_DNA"/>
</dbReference>
<dbReference type="EMBL" id="U81240">
    <property type="protein sequence ID" value="AAB39496.1"/>
    <property type="molecule type" value="mRNA"/>
</dbReference>
<dbReference type="SMR" id="Q62935"/>
<dbReference type="STRING" id="10116.ENSRNOP00000026643"/>
<dbReference type="GlyCosmos" id="Q62935">
    <property type="glycosylation" value="8 sites, No reported glycans"/>
</dbReference>
<dbReference type="GlyGen" id="Q62935">
    <property type="glycosylation" value="8 sites"/>
</dbReference>
<dbReference type="PhosphoSitePlus" id="Q62935"/>
<dbReference type="PaxDb" id="10116-ENSRNOP00000026643"/>
<dbReference type="PeptideAtlas" id="Q62935"/>
<dbReference type="UCSC" id="RGD:621759">
    <property type="organism name" value="rat"/>
</dbReference>
<dbReference type="AGR" id="RGD:621759"/>
<dbReference type="RGD" id="621759">
    <property type="gene designation" value="Vwf"/>
</dbReference>
<dbReference type="eggNOG" id="KOG1216">
    <property type="taxonomic scope" value="Eukaryota"/>
</dbReference>
<dbReference type="InParanoid" id="Q62935"/>
<dbReference type="PhylomeDB" id="Q62935"/>
<dbReference type="Proteomes" id="UP000002494">
    <property type="component" value="Unplaced"/>
</dbReference>
<dbReference type="GO" id="GO:0062023">
    <property type="term" value="C:collagen-containing extracellular matrix"/>
    <property type="evidence" value="ECO:0000318"/>
    <property type="project" value="GO_Central"/>
</dbReference>
<dbReference type="GO" id="GO:0005783">
    <property type="term" value="C:endoplasmic reticulum"/>
    <property type="evidence" value="ECO:0000266"/>
    <property type="project" value="RGD"/>
</dbReference>
<dbReference type="GO" id="GO:0009897">
    <property type="term" value="C:external side of plasma membrane"/>
    <property type="evidence" value="ECO:0000266"/>
    <property type="project" value="RGD"/>
</dbReference>
<dbReference type="GO" id="GO:0005576">
    <property type="term" value="C:extracellular region"/>
    <property type="evidence" value="ECO:0000266"/>
    <property type="project" value="RGD"/>
</dbReference>
<dbReference type="GO" id="GO:0005615">
    <property type="term" value="C:extracellular space"/>
    <property type="evidence" value="ECO:0000314"/>
    <property type="project" value="RGD"/>
</dbReference>
<dbReference type="GO" id="GO:0033093">
    <property type="term" value="C:Weibel-Palade body"/>
    <property type="evidence" value="ECO:0000266"/>
    <property type="project" value="RGD"/>
</dbReference>
<dbReference type="GO" id="GO:0005518">
    <property type="term" value="F:collagen binding"/>
    <property type="evidence" value="ECO:0000266"/>
    <property type="project" value="RGD"/>
</dbReference>
<dbReference type="GO" id="GO:0042802">
    <property type="term" value="F:identical protein binding"/>
    <property type="evidence" value="ECO:0000266"/>
    <property type="project" value="RGD"/>
</dbReference>
<dbReference type="GO" id="GO:0019865">
    <property type="term" value="F:immunoglobulin binding"/>
    <property type="evidence" value="ECO:0000266"/>
    <property type="project" value="RGD"/>
</dbReference>
<dbReference type="GO" id="GO:0005178">
    <property type="term" value="F:integrin binding"/>
    <property type="evidence" value="ECO:0000266"/>
    <property type="project" value="RGD"/>
</dbReference>
<dbReference type="GO" id="GO:0002020">
    <property type="term" value="F:protease binding"/>
    <property type="evidence" value="ECO:0000266"/>
    <property type="project" value="RGD"/>
</dbReference>
<dbReference type="GO" id="GO:0051087">
    <property type="term" value="F:protein-folding chaperone binding"/>
    <property type="evidence" value="ECO:0000266"/>
    <property type="project" value="RGD"/>
</dbReference>
<dbReference type="GO" id="GO:0002543">
    <property type="term" value="P:activation of blood coagulation via clotting cascade"/>
    <property type="evidence" value="ECO:0000266"/>
    <property type="project" value="RGD"/>
</dbReference>
<dbReference type="GO" id="GO:0007596">
    <property type="term" value="P:blood coagulation"/>
    <property type="evidence" value="ECO:0000266"/>
    <property type="project" value="RGD"/>
</dbReference>
<dbReference type="GO" id="GO:0007155">
    <property type="term" value="P:cell adhesion"/>
    <property type="evidence" value="ECO:0000266"/>
    <property type="project" value="RGD"/>
</dbReference>
<dbReference type="GO" id="GO:0031589">
    <property type="term" value="P:cell-substrate adhesion"/>
    <property type="evidence" value="ECO:0000266"/>
    <property type="project" value="RGD"/>
</dbReference>
<dbReference type="GO" id="GO:0070417">
    <property type="term" value="P:cellular response to cold"/>
    <property type="evidence" value="ECO:0000270"/>
    <property type="project" value="RGD"/>
</dbReference>
<dbReference type="GO" id="GO:0071222">
    <property type="term" value="P:cellular response to lipopolysaccharide"/>
    <property type="evidence" value="ECO:0000270"/>
    <property type="project" value="RGD"/>
</dbReference>
<dbReference type="GO" id="GO:0030198">
    <property type="term" value="P:extracellular matrix organization"/>
    <property type="evidence" value="ECO:0000318"/>
    <property type="project" value="GO_Central"/>
</dbReference>
<dbReference type="GO" id="GO:0007599">
    <property type="term" value="P:hemostasis"/>
    <property type="evidence" value="ECO:0000266"/>
    <property type="project" value="RGD"/>
</dbReference>
<dbReference type="GO" id="GO:0006954">
    <property type="term" value="P:inflammatory response"/>
    <property type="evidence" value="ECO:0000266"/>
    <property type="project" value="RGD"/>
</dbReference>
<dbReference type="GO" id="GO:0001889">
    <property type="term" value="P:liver development"/>
    <property type="evidence" value="ECO:0000266"/>
    <property type="project" value="RGD"/>
</dbReference>
<dbReference type="GO" id="GO:0097421">
    <property type="term" value="P:liver regeneration"/>
    <property type="evidence" value="ECO:0000270"/>
    <property type="project" value="RGD"/>
</dbReference>
<dbReference type="GO" id="GO:0001890">
    <property type="term" value="P:placenta development"/>
    <property type="evidence" value="ECO:0000266"/>
    <property type="project" value="RGD"/>
</dbReference>
<dbReference type="GO" id="GO:0030168">
    <property type="term" value="P:platelet activation"/>
    <property type="evidence" value="ECO:0000266"/>
    <property type="project" value="RGD"/>
</dbReference>
<dbReference type="GO" id="GO:1902533">
    <property type="term" value="P:positive regulation of intracellular signal transduction"/>
    <property type="evidence" value="ECO:0000266"/>
    <property type="project" value="RGD"/>
</dbReference>
<dbReference type="GO" id="GO:0035902">
    <property type="term" value="P:response to immobilization stress"/>
    <property type="evidence" value="ECO:0000270"/>
    <property type="project" value="RGD"/>
</dbReference>
<dbReference type="GO" id="GO:0033591">
    <property type="term" value="P:response to L-ascorbic acid"/>
    <property type="evidence" value="ECO:0000270"/>
    <property type="project" value="RGD"/>
</dbReference>
<dbReference type="GO" id="GO:0010165">
    <property type="term" value="P:response to X-ray"/>
    <property type="evidence" value="ECO:0000270"/>
    <property type="project" value="RGD"/>
</dbReference>
<dbReference type="CDD" id="cd01450">
    <property type="entry name" value="vWFA_subfamily_ECM"/>
    <property type="match status" value="2"/>
</dbReference>
<dbReference type="FunFam" id="3.40.50.410:FF:000026">
    <property type="entry name" value="Collagen, type VI, alpha 1"/>
    <property type="match status" value="1"/>
</dbReference>
<dbReference type="Gene3D" id="3.40.50.410">
    <property type="entry name" value="von Willebrand factor, type A domain"/>
    <property type="match status" value="2"/>
</dbReference>
<dbReference type="InterPro" id="IPR050525">
    <property type="entry name" value="ECM_Assembly_Org"/>
</dbReference>
<dbReference type="InterPro" id="IPR032361">
    <property type="entry name" value="VWA_N2"/>
</dbReference>
<dbReference type="InterPro" id="IPR002035">
    <property type="entry name" value="VWF_A"/>
</dbReference>
<dbReference type="InterPro" id="IPR036465">
    <property type="entry name" value="vWFA_dom_sf"/>
</dbReference>
<dbReference type="PANTHER" id="PTHR24020">
    <property type="entry name" value="COLLAGEN ALPHA"/>
    <property type="match status" value="1"/>
</dbReference>
<dbReference type="PANTHER" id="PTHR24020:SF84">
    <property type="entry name" value="VWFA DOMAIN-CONTAINING PROTEIN"/>
    <property type="match status" value="1"/>
</dbReference>
<dbReference type="Pfam" id="PF00092">
    <property type="entry name" value="VWA"/>
    <property type="match status" value="2"/>
</dbReference>
<dbReference type="Pfam" id="PF16164">
    <property type="entry name" value="VWA_N2"/>
    <property type="match status" value="1"/>
</dbReference>
<dbReference type="PRINTS" id="PR00453">
    <property type="entry name" value="VWFADOMAIN"/>
</dbReference>
<dbReference type="SMART" id="SM00327">
    <property type="entry name" value="VWA"/>
    <property type="match status" value="2"/>
</dbReference>
<dbReference type="SUPFAM" id="SSF53300">
    <property type="entry name" value="vWA-like"/>
    <property type="match status" value="2"/>
</dbReference>
<dbReference type="PROSITE" id="PS50234">
    <property type="entry name" value="VWFA"/>
    <property type="match status" value="2"/>
</dbReference>
<feature type="chain" id="PRO_0000065939" description="von Willebrand factor">
    <location>
        <begin position="1" status="less than"/>
        <end position="430" status="greater than"/>
    </location>
</feature>
<feature type="domain" description="VWFA 1; binding site for platelet glycoprotein Ib" evidence="3">
    <location>
        <begin position="52"/>
        <end position="228"/>
    </location>
</feature>
<feature type="domain" description="VWFA 2" evidence="3">
    <location>
        <begin position="273"/>
        <end position="430" status="greater than"/>
    </location>
</feature>
<feature type="glycosylation site" description="N-linked (GlcNAc...) asparagine" evidence="2">
    <location>
        <position position="6"/>
    </location>
</feature>
<feature type="glycosylation site" description="O-linked (GalNAc...) threonine" evidence="2">
    <location>
        <position position="23"/>
    </location>
</feature>
<feature type="glycosylation site" description="O-linked (GalNAc...) threonine" evidence="2">
    <location>
        <position position="30"/>
    </location>
</feature>
<feature type="glycosylation site" description="O-linked (GalNAc...) threonine" evidence="2">
    <location>
        <position position="31"/>
    </location>
</feature>
<feature type="glycosylation site" description="O-linked (GalNAc...) threonine" evidence="2">
    <location>
        <position position="252"/>
    </location>
</feature>
<feature type="glycosylation site" description="O-linked (GalNAc...) serine" evidence="2">
    <location>
        <position position="261"/>
    </location>
</feature>
<feature type="glycosylation site" description="N-linked (GlcNAc...) asparagine" evidence="2">
    <location>
        <position position="290"/>
    </location>
</feature>
<feature type="glycosylation site" description="N-linked (GlcNAc...) asparagine" evidence="2">
    <location>
        <position position="349"/>
    </location>
</feature>
<feature type="disulfide bond" evidence="2">
    <location>
        <begin position="9"/>
        <end position="12"/>
    </location>
</feature>
<feature type="disulfide bond" evidence="2">
    <location>
        <begin position="47"/>
        <end position="233"/>
    </location>
</feature>
<feature type="sequence conflict" description="In Ref. 1; AAA96311/AAB39496." evidence="4" ref="1">
    <original>S</original>
    <variation>T</variation>
    <location>
        <position position="243"/>
    </location>
</feature>
<feature type="non-terminal residue" evidence="5">
    <location>
        <position position="1"/>
    </location>
</feature>
<feature type="non-terminal residue" evidence="7">
    <location>
        <position position="430"/>
    </location>
</feature>
<organism>
    <name type="scientific">Rattus norvegicus</name>
    <name type="common">Rat</name>
    <dbReference type="NCBI Taxonomy" id="10116"/>
    <lineage>
        <taxon>Eukaryota</taxon>
        <taxon>Metazoa</taxon>
        <taxon>Chordata</taxon>
        <taxon>Craniata</taxon>
        <taxon>Vertebrata</taxon>
        <taxon>Euteleostomi</taxon>
        <taxon>Mammalia</taxon>
        <taxon>Eutheria</taxon>
        <taxon>Euarchontoglires</taxon>
        <taxon>Glires</taxon>
        <taxon>Rodentia</taxon>
        <taxon>Myomorpha</taxon>
        <taxon>Muroidea</taxon>
        <taxon>Muridae</taxon>
        <taxon>Murinae</taxon>
        <taxon>Rattus</taxon>
    </lineage>
</organism>
<accession>Q62935</accession>
<accession>Q78E31</accession>
<accession>Q9Z0P2</accession>
<reference evidence="4 5" key="1">
    <citation type="submission" date="1996-02" db="EMBL/GenBank/DDBJ databases">
        <authorList>
            <person name="Senis Y.A."/>
            <person name="Slack A."/>
            <person name="Giles A.R."/>
            <person name="Maurice D.H."/>
        </authorList>
    </citation>
    <scope>NUCLEOTIDE SEQUENCE [MRNA] OF 1-372</scope>
    <source>
        <strain evidence="5">Wistar</strain>
        <tissue evidence="5">Aortic endothelium</tissue>
    </source>
</reference>
<reference evidence="4 7" key="2">
    <citation type="journal article" date="1999" name="Mol. Biol. Evol.">
        <title>Molecular evolution of the nuclear von Willebrand factor gene in mammals and the phylogeny of rodents.</title>
        <authorList>
            <person name="Huchon D."/>
            <person name="Catzeflis F.M."/>
            <person name="Douzery E.J.P."/>
        </authorList>
    </citation>
    <scope>NUCLEOTIDE SEQUENCE OF 13-430</scope>
</reference>
<reference evidence="4 5" key="3">
    <citation type="submission" date="1996-12" db="EMBL/GenBank/DDBJ databases">
        <authorList>
            <person name="Adams L.D."/>
            <person name="Werny I."/>
            <person name="Schwartz S.M."/>
        </authorList>
    </citation>
    <scope>NUCLEOTIDE SEQUENCE OF 131-267</scope>
    <source>
        <strain evidence="6">Fischer 344</strain>
        <tissue evidence="6">Aorta</tissue>
    </source>
</reference>
<reference evidence="4" key="4">
    <citation type="journal article" date="2003" name="J. Thromb. Haemost.">
        <title>von Willebrand factor, platelets and endothelial cell interactions.</title>
        <authorList>
            <person name="Ruggeri Z.M."/>
        </authorList>
    </citation>
    <scope>REVIEW</scope>
</reference>
<comment type="function">
    <text evidence="2">Important in the maintenance of hemostasis, it promotes adhesion of platelets to the sites of vascular injury by forming a molecular bridge between sub-endothelial collagen matrix and platelet-surface receptor complex GPIb-IX-V. Also acts as a chaperone for coagulation factor VIII, delivering it to the site of injury, stabilizing its heterodimeric structure and protecting it from premature clearance from plasma (By similarity).</text>
</comment>
<comment type="subunit">
    <text evidence="1">Multimeric. Interacts with F8 (By similarity).</text>
</comment>
<comment type="subcellular location">
    <subcellularLocation>
        <location evidence="1">Secreted</location>
    </subcellularLocation>
    <subcellularLocation>
        <location evidence="1">Secreted</location>
        <location evidence="1">Extracellular space</location>
        <location evidence="1">Extracellular matrix</location>
    </subcellularLocation>
    <text evidence="1">Localized to storage granules.</text>
</comment>
<comment type="tissue specificity">
    <text>Plasma.</text>
</comment>
<comment type="PTM">
    <text evidence="1">N- and O-glycosylated.</text>
</comment>
<keyword id="KW-0094">Blood coagulation</keyword>
<keyword id="KW-0130">Cell adhesion</keyword>
<keyword id="KW-1015">Disulfide bond</keyword>
<keyword id="KW-0272">Extracellular matrix</keyword>
<keyword id="KW-0325">Glycoprotein</keyword>
<keyword id="KW-0356">Hemostasis</keyword>
<keyword id="KW-1185">Reference proteome</keyword>
<keyword id="KW-0677">Repeat</keyword>
<keyword id="KW-0964">Secreted</keyword>